<comment type="function">
    <text evidence="1">Specifically methylates the N7 position of guanine in position 527 of 16S rRNA.</text>
</comment>
<comment type="catalytic activity">
    <reaction evidence="1">
        <text>guanosine(527) in 16S rRNA + S-adenosyl-L-methionine = N(7)-methylguanosine(527) in 16S rRNA + S-adenosyl-L-homocysteine</text>
        <dbReference type="Rhea" id="RHEA:42732"/>
        <dbReference type="Rhea" id="RHEA-COMP:10209"/>
        <dbReference type="Rhea" id="RHEA-COMP:10210"/>
        <dbReference type="ChEBI" id="CHEBI:57856"/>
        <dbReference type="ChEBI" id="CHEBI:59789"/>
        <dbReference type="ChEBI" id="CHEBI:74269"/>
        <dbReference type="ChEBI" id="CHEBI:74480"/>
        <dbReference type="EC" id="2.1.1.170"/>
    </reaction>
</comment>
<comment type="subcellular location">
    <subcellularLocation>
        <location evidence="1">Cytoplasm</location>
    </subcellularLocation>
</comment>
<comment type="similarity">
    <text evidence="1">Belongs to the methyltransferase superfamily. RNA methyltransferase RsmG family.</text>
</comment>
<reference key="1">
    <citation type="journal article" date="2007" name="Genome Biol.">
        <title>Comparison of Francisella tularensis genomes reveals evolutionary events associated with the emergence of human pathogenic strains.</title>
        <authorList>
            <person name="Rohmer L."/>
            <person name="Fong C."/>
            <person name="Abmayr S."/>
            <person name="Wasnick M."/>
            <person name="Larson Freeman T.J."/>
            <person name="Radey M."/>
            <person name="Guina T."/>
            <person name="Svensson K."/>
            <person name="Hayden H.S."/>
            <person name="Jacobs M."/>
            <person name="Gallagher L.A."/>
            <person name="Manoil C."/>
            <person name="Ernst R.K."/>
            <person name="Drees B."/>
            <person name="Buckley D."/>
            <person name="Haugen E."/>
            <person name="Bovee D."/>
            <person name="Zhou Y."/>
            <person name="Chang J."/>
            <person name="Levy R."/>
            <person name="Lim R."/>
            <person name="Gillett W."/>
            <person name="Guenthener D."/>
            <person name="Kang A."/>
            <person name="Shaffer S.A."/>
            <person name="Taylor G."/>
            <person name="Chen J."/>
            <person name="Gallis B."/>
            <person name="D'Argenio D.A."/>
            <person name="Forsman M."/>
            <person name="Olson M.V."/>
            <person name="Goodlett D.R."/>
            <person name="Kaul R."/>
            <person name="Miller S.I."/>
            <person name="Brittnacher M.J."/>
        </authorList>
    </citation>
    <scope>NUCLEOTIDE SEQUENCE [LARGE SCALE GENOMIC DNA]</scope>
    <source>
        <strain>U112</strain>
    </source>
</reference>
<dbReference type="EC" id="2.1.1.170" evidence="1"/>
<dbReference type="EMBL" id="CP000439">
    <property type="protein sequence ID" value="ABK89009.1"/>
    <property type="molecule type" value="Genomic_DNA"/>
</dbReference>
<dbReference type="RefSeq" id="WP_003040969.1">
    <property type="nucleotide sequence ID" value="NC_008601.1"/>
</dbReference>
<dbReference type="SMR" id="A0Q444"/>
<dbReference type="KEGG" id="ftn:FTN_0098"/>
<dbReference type="KEGG" id="ftx:AW25_102"/>
<dbReference type="BioCyc" id="FTUL401614:G1G75-102-MONOMER"/>
<dbReference type="Proteomes" id="UP000000762">
    <property type="component" value="Chromosome"/>
</dbReference>
<dbReference type="GO" id="GO:0005829">
    <property type="term" value="C:cytosol"/>
    <property type="evidence" value="ECO:0007669"/>
    <property type="project" value="TreeGrafter"/>
</dbReference>
<dbReference type="GO" id="GO:0070043">
    <property type="term" value="F:rRNA (guanine-N7-)-methyltransferase activity"/>
    <property type="evidence" value="ECO:0007669"/>
    <property type="project" value="UniProtKB-UniRule"/>
</dbReference>
<dbReference type="Gene3D" id="3.40.50.150">
    <property type="entry name" value="Vaccinia Virus protein VP39"/>
    <property type="match status" value="1"/>
</dbReference>
<dbReference type="HAMAP" id="MF_00074">
    <property type="entry name" value="16SrRNA_methyltr_G"/>
    <property type="match status" value="1"/>
</dbReference>
<dbReference type="InterPro" id="IPR003682">
    <property type="entry name" value="rRNA_ssu_MeTfrase_G"/>
</dbReference>
<dbReference type="InterPro" id="IPR029063">
    <property type="entry name" value="SAM-dependent_MTases_sf"/>
</dbReference>
<dbReference type="NCBIfam" id="TIGR00138">
    <property type="entry name" value="rsmG_gidB"/>
    <property type="match status" value="1"/>
</dbReference>
<dbReference type="PANTHER" id="PTHR31760">
    <property type="entry name" value="S-ADENOSYL-L-METHIONINE-DEPENDENT METHYLTRANSFERASES SUPERFAMILY PROTEIN"/>
    <property type="match status" value="1"/>
</dbReference>
<dbReference type="PANTHER" id="PTHR31760:SF0">
    <property type="entry name" value="S-ADENOSYL-L-METHIONINE-DEPENDENT METHYLTRANSFERASES SUPERFAMILY PROTEIN"/>
    <property type="match status" value="1"/>
</dbReference>
<dbReference type="Pfam" id="PF02527">
    <property type="entry name" value="GidB"/>
    <property type="match status" value="1"/>
</dbReference>
<dbReference type="PIRSF" id="PIRSF003078">
    <property type="entry name" value="GidB"/>
    <property type="match status" value="1"/>
</dbReference>
<dbReference type="SUPFAM" id="SSF53335">
    <property type="entry name" value="S-adenosyl-L-methionine-dependent methyltransferases"/>
    <property type="match status" value="1"/>
</dbReference>
<name>RSMG_FRATN</name>
<sequence>MDIMKDKIRQALSELDILATEVQIDQWLDYLKLLEKWNKVYNMTAIKNIDEMLVKHLFDSLAVAKYIKGDSTVDVGTGGGLPGVVLAILYPQHQFTLVDSVGKKIMFLKNVKKSLSLNNINPINTRIENLEGNFDNIISRAFSSVDTFYELCKHFLTEHNQMLAMKGRDLEERNLESLPLNIEKYSIKVPFLNAERNLIVMRKKL</sequence>
<accession>A0Q444</accession>
<gene>
    <name evidence="1" type="primary">rsmG</name>
    <name type="ordered locus">FTN_0098</name>
</gene>
<proteinExistence type="inferred from homology"/>
<protein>
    <recommendedName>
        <fullName evidence="1">Ribosomal RNA small subunit methyltransferase G</fullName>
        <ecNumber evidence="1">2.1.1.170</ecNumber>
    </recommendedName>
    <alternativeName>
        <fullName evidence="1">16S rRNA 7-methylguanosine methyltransferase</fullName>
        <shortName evidence="1">16S rRNA m7G methyltransferase</shortName>
    </alternativeName>
</protein>
<keyword id="KW-0963">Cytoplasm</keyword>
<keyword id="KW-0489">Methyltransferase</keyword>
<keyword id="KW-0698">rRNA processing</keyword>
<keyword id="KW-0949">S-adenosyl-L-methionine</keyword>
<keyword id="KW-0808">Transferase</keyword>
<evidence type="ECO:0000255" key="1">
    <source>
        <dbReference type="HAMAP-Rule" id="MF_00074"/>
    </source>
</evidence>
<organism>
    <name type="scientific">Francisella tularensis subsp. novicida (strain U112)</name>
    <dbReference type="NCBI Taxonomy" id="401614"/>
    <lineage>
        <taxon>Bacteria</taxon>
        <taxon>Pseudomonadati</taxon>
        <taxon>Pseudomonadota</taxon>
        <taxon>Gammaproteobacteria</taxon>
        <taxon>Thiotrichales</taxon>
        <taxon>Francisellaceae</taxon>
        <taxon>Francisella</taxon>
    </lineage>
</organism>
<feature type="chain" id="PRO_1000010148" description="Ribosomal RNA small subunit methyltransferase G">
    <location>
        <begin position="1"/>
        <end position="205"/>
    </location>
</feature>
<feature type="binding site" evidence="1">
    <location>
        <position position="76"/>
    </location>
    <ligand>
        <name>S-adenosyl-L-methionine</name>
        <dbReference type="ChEBI" id="CHEBI:59789"/>
    </ligand>
</feature>
<feature type="binding site" evidence="1">
    <location>
        <position position="81"/>
    </location>
    <ligand>
        <name>S-adenosyl-L-methionine</name>
        <dbReference type="ChEBI" id="CHEBI:59789"/>
    </ligand>
</feature>
<feature type="binding site" evidence="1">
    <location>
        <begin position="127"/>
        <end position="128"/>
    </location>
    <ligand>
        <name>S-adenosyl-L-methionine</name>
        <dbReference type="ChEBI" id="CHEBI:59789"/>
    </ligand>
</feature>
<feature type="binding site" evidence="1">
    <location>
        <position position="140"/>
    </location>
    <ligand>
        <name>S-adenosyl-L-methionine</name>
        <dbReference type="ChEBI" id="CHEBI:59789"/>
    </ligand>
</feature>